<accession>P43172</accession>
<organism>
    <name type="scientific">Ascaris suum</name>
    <name type="common">Pig roundworm</name>
    <name type="synonym">Ascaris lumbricoides</name>
    <dbReference type="NCBI Taxonomy" id="6253"/>
    <lineage>
        <taxon>Eukaryota</taxon>
        <taxon>Metazoa</taxon>
        <taxon>Ecdysozoa</taxon>
        <taxon>Nematoda</taxon>
        <taxon>Chromadorea</taxon>
        <taxon>Rhabditida</taxon>
        <taxon>Spirurina</taxon>
        <taxon>Ascaridomorpha</taxon>
        <taxon>Ascaridoidea</taxon>
        <taxon>Ascarididae</taxon>
        <taxon>Ascaris</taxon>
    </lineage>
</organism>
<reference key="1">
    <citation type="journal article" date="1995" name="Peptides">
        <title>Eight novel FMRFamide-like neuropeptides isolated from the nematode Ascaris suum.</title>
        <authorList>
            <person name="Cowden C."/>
            <person name="Stretton A.O.W."/>
        </authorList>
    </citation>
    <scope>PROTEIN SEQUENCE</scope>
    <scope>AMIDATION AT PHE-9</scope>
</reference>
<name>FAR9_ASCSU</name>
<sequence length="9" mass="1012">GLGPRPLRF</sequence>
<feature type="peptide" id="PRO_0000043660" description="FMRFamide-like neuropeptide AF9">
    <location>
        <begin position="1"/>
        <end position="9"/>
    </location>
</feature>
<feature type="modified residue" description="Phenylalanine amide" evidence="1">
    <location>
        <position position="9"/>
    </location>
</feature>
<proteinExistence type="evidence at protein level"/>
<keyword id="KW-0027">Amidation</keyword>
<keyword id="KW-0903">Direct protein sequencing</keyword>
<keyword id="KW-0527">Neuropeptide</keyword>
<keyword id="KW-0964">Secreted</keyword>
<comment type="subcellular location">
    <subcellularLocation>
        <location>Secreted</location>
    </subcellularLocation>
</comment>
<comment type="similarity">
    <text evidence="2">Belongs to the FARP (FMRFamide related peptide) family.</text>
</comment>
<protein>
    <recommendedName>
        <fullName>FMRFamide-like neuropeptide AF9</fullName>
    </recommendedName>
</protein>
<dbReference type="GO" id="GO:0005576">
    <property type="term" value="C:extracellular region"/>
    <property type="evidence" value="ECO:0007669"/>
    <property type="project" value="UniProtKB-SubCell"/>
</dbReference>
<dbReference type="GO" id="GO:0007218">
    <property type="term" value="P:neuropeptide signaling pathway"/>
    <property type="evidence" value="ECO:0007669"/>
    <property type="project" value="UniProtKB-KW"/>
</dbReference>
<evidence type="ECO:0000269" key="1">
    <source>
    </source>
</evidence>
<evidence type="ECO:0000305" key="2"/>